<evidence type="ECO:0000250" key="1"/>
<evidence type="ECO:0000255" key="2">
    <source>
        <dbReference type="PROSITE-ProRule" id="PRU00160"/>
    </source>
</evidence>
<evidence type="ECO:0000305" key="3"/>
<reference key="1">
    <citation type="journal article" date="2006" name="Nature">
        <title>Insights from the genome of the biotrophic fungal plant pathogen Ustilago maydis.</title>
        <authorList>
            <person name="Kaemper J."/>
            <person name="Kahmann R."/>
            <person name="Boelker M."/>
            <person name="Ma L.-J."/>
            <person name="Brefort T."/>
            <person name="Saville B.J."/>
            <person name="Banuett F."/>
            <person name="Kronstad J.W."/>
            <person name="Gold S.E."/>
            <person name="Mueller O."/>
            <person name="Perlin M.H."/>
            <person name="Woesten H.A.B."/>
            <person name="de Vries R."/>
            <person name="Ruiz-Herrera J."/>
            <person name="Reynaga-Pena C.G."/>
            <person name="Snetselaar K."/>
            <person name="McCann M."/>
            <person name="Perez-Martin J."/>
            <person name="Feldbruegge M."/>
            <person name="Basse C.W."/>
            <person name="Steinberg G."/>
            <person name="Ibeas J.I."/>
            <person name="Holloman W."/>
            <person name="Guzman P."/>
            <person name="Farman M.L."/>
            <person name="Stajich J.E."/>
            <person name="Sentandreu R."/>
            <person name="Gonzalez-Prieto J.M."/>
            <person name="Kennell J.C."/>
            <person name="Molina L."/>
            <person name="Schirawski J."/>
            <person name="Mendoza-Mendoza A."/>
            <person name="Greilinger D."/>
            <person name="Muench K."/>
            <person name="Roessel N."/>
            <person name="Scherer M."/>
            <person name="Vranes M."/>
            <person name="Ladendorf O."/>
            <person name="Vincon V."/>
            <person name="Fuchs U."/>
            <person name="Sandrock B."/>
            <person name="Meng S."/>
            <person name="Ho E.C.H."/>
            <person name="Cahill M.J."/>
            <person name="Boyce K.J."/>
            <person name="Klose J."/>
            <person name="Klosterman S.J."/>
            <person name="Deelstra H.J."/>
            <person name="Ortiz-Castellanos L."/>
            <person name="Li W."/>
            <person name="Sanchez-Alonso P."/>
            <person name="Schreier P.H."/>
            <person name="Haeuser-Hahn I."/>
            <person name="Vaupel M."/>
            <person name="Koopmann E."/>
            <person name="Friedrich G."/>
            <person name="Voss H."/>
            <person name="Schlueter T."/>
            <person name="Margolis J."/>
            <person name="Platt D."/>
            <person name="Swimmer C."/>
            <person name="Gnirke A."/>
            <person name="Chen F."/>
            <person name="Vysotskaia V."/>
            <person name="Mannhaupt G."/>
            <person name="Gueldener U."/>
            <person name="Muensterkoetter M."/>
            <person name="Haase D."/>
            <person name="Oesterheld M."/>
            <person name="Mewes H.-W."/>
            <person name="Mauceli E.W."/>
            <person name="DeCaprio D."/>
            <person name="Wade C.M."/>
            <person name="Butler J."/>
            <person name="Young S.K."/>
            <person name="Jaffe D.B."/>
            <person name="Calvo S.E."/>
            <person name="Nusbaum C."/>
            <person name="Galagan J.E."/>
            <person name="Birren B.W."/>
        </authorList>
    </citation>
    <scope>NUCLEOTIDE SEQUENCE [LARGE SCALE GENOMIC DNA]</scope>
    <source>
        <strain>DSM 14603 / FGSC 9021 / UM521</strain>
    </source>
</reference>
<reference key="2">
    <citation type="submission" date="2014-09" db="EMBL/GenBank/DDBJ databases">
        <authorList>
            <person name="Gueldener U."/>
            <person name="Muensterkoetter M."/>
            <person name="Walter M.C."/>
            <person name="Mannhaupt G."/>
            <person name="Kahmann R."/>
        </authorList>
    </citation>
    <scope>GENOME REANNOTATION</scope>
    <source>
        <strain>DSM 14603 / FGSC 9021 / UM521</strain>
    </source>
</reference>
<name>OCA1_MYCMD</name>
<proteinExistence type="inferred from homology"/>
<organism>
    <name type="scientific">Mycosarcoma maydis</name>
    <name type="common">Corn smut fungus</name>
    <name type="synonym">Ustilago maydis</name>
    <dbReference type="NCBI Taxonomy" id="5270"/>
    <lineage>
        <taxon>Eukaryota</taxon>
        <taxon>Fungi</taxon>
        <taxon>Dikarya</taxon>
        <taxon>Basidiomycota</taxon>
        <taxon>Ustilaginomycotina</taxon>
        <taxon>Ustilaginomycetes</taxon>
        <taxon>Ustilaginales</taxon>
        <taxon>Ustilaginaceae</taxon>
        <taxon>Mycosarcoma</taxon>
    </lineage>
</organism>
<comment type="function">
    <text evidence="1">Putative tyrosine-protein phosphatase required for protection against superoxide stress.</text>
</comment>
<comment type="catalytic activity">
    <reaction>
        <text>O-phospho-L-tyrosyl-[protein] + H2O = L-tyrosyl-[protein] + phosphate</text>
        <dbReference type="Rhea" id="RHEA:10684"/>
        <dbReference type="Rhea" id="RHEA-COMP:10136"/>
        <dbReference type="Rhea" id="RHEA-COMP:20101"/>
        <dbReference type="ChEBI" id="CHEBI:15377"/>
        <dbReference type="ChEBI" id="CHEBI:43474"/>
        <dbReference type="ChEBI" id="CHEBI:46858"/>
        <dbReference type="ChEBI" id="CHEBI:61978"/>
        <dbReference type="EC" id="3.1.3.48"/>
    </reaction>
</comment>
<comment type="subcellular location">
    <subcellularLocation>
        <location evidence="1">Cytoplasm</location>
    </subcellularLocation>
</comment>
<comment type="similarity">
    <text evidence="3">Belongs to the protein-tyrosine phosphatase family.</text>
</comment>
<dbReference type="EC" id="3.1.3.48"/>
<dbReference type="EMBL" id="CM003150">
    <property type="protein sequence ID" value="KIS67838.1"/>
    <property type="molecule type" value="Genomic_DNA"/>
</dbReference>
<dbReference type="RefSeq" id="XP_011390380.1">
    <property type="nucleotide sequence ID" value="XM_011392078.1"/>
</dbReference>
<dbReference type="SMR" id="Q4P7L6"/>
<dbReference type="FunCoup" id="Q4P7L6">
    <property type="interactions" value="115"/>
</dbReference>
<dbReference type="STRING" id="237631.Q4P7L6"/>
<dbReference type="EnsemblFungi" id="KIS67838">
    <property type="protein sequence ID" value="KIS67838"/>
    <property type="gene ID" value="UMAG_03897"/>
</dbReference>
<dbReference type="GeneID" id="23564228"/>
<dbReference type="KEGG" id="uma:UMAG_03897"/>
<dbReference type="VEuPathDB" id="FungiDB:UMAG_03897"/>
<dbReference type="eggNOG" id="KOG1572">
    <property type="taxonomic scope" value="Eukaryota"/>
</dbReference>
<dbReference type="HOGENOM" id="CLU_047845_5_1_1"/>
<dbReference type="InParanoid" id="Q4P7L6"/>
<dbReference type="OMA" id="PWNPISE"/>
<dbReference type="OrthoDB" id="6375174at2759"/>
<dbReference type="Proteomes" id="UP000000561">
    <property type="component" value="Chromosome 11"/>
</dbReference>
<dbReference type="GO" id="GO:0005737">
    <property type="term" value="C:cytoplasm"/>
    <property type="evidence" value="ECO:0007669"/>
    <property type="project" value="UniProtKB-SubCell"/>
</dbReference>
<dbReference type="GO" id="GO:0016791">
    <property type="term" value="F:phosphatase activity"/>
    <property type="evidence" value="ECO:0000318"/>
    <property type="project" value="GO_Central"/>
</dbReference>
<dbReference type="GO" id="GO:0004725">
    <property type="term" value="F:protein tyrosine phosphatase activity"/>
    <property type="evidence" value="ECO:0007669"/>
    <property type="project" value="UniProtKB-EC"/>
</dbReference>
<dbReference type="CDD" id="cd14531">
    <property type="entry name" value="PFA-DSP_Oca1"/>
    <property type="match status" value="1"/>
</dbReference>
<dbReference type="FunFam" id="3.90.190.10:FF:000035">
    <property type="entry name" value="Tyrosine phosphatase, putative"/>
    <property type="match status" value="1"/>
</dbReference>
<dbReference type="Gene3D" id="3.90.190.10">
    <property type="entry name" value="Protein tyrosine phosphatase superfamily"/>
    <property type="match status" value="1"/>
</dbReference>
<dbReference type="InterPro" id="IPR020428">
    <property type="entry name" value="PFA-DSPs"/>
</dbReference>
<dbReference type="InterPro" id="IPR029021">
    <property type="entry name" value="Prot-tyrosine_phosphatase-like"/>
</dbReference>
<dbReference type="InterPro" id="IPR004861">
    <property type="entry name" value="Siw14-like"/>
</dbReference>
<dbReference type="InterPro" id="IPR020422">
    <property type="entry name" value="TYR_PHOSPHATASE_DUAL_dom"/>
</dbReference>
<dbReference type="PANTHER" id="PTHR31126">
    <property type="entry name" value="TYROSINE-PROTEIN PHOSPHATASE"/>
    <property type="match status" value="1"/>
</dbReference>
<dbReference type="PANTHER" id="PTHR31126:SF8">
    <property type="entry name" value="TYROSINE-PROTEIN PHOSPHATASE OCA1-RELATED"/>
    <property type="match status" value="1"/>
</dbReference>
<dbReference type="Pfam" id="PF03162">
    <property type="entry name" value="Y_phosphatase2"/>
    <property type="match status" value="1"/>
</dbReference>
<dbReference type="PRINTS" id="PR01911">
    <property type="entry name" value="PFDSPHPHTASE"/>
</dbReference>
<dbReference type="SUPFAM" id="SSF52799">
    <property type="entry name" value="(Phosphotyrosine protein) phosphatases II"/>
    <property type="match status" value="1"/>
</dbReference>
<dbReference type="PROSITE" id="PS50054">
    <property type="entry name" value="TYR_PHOSPHATASE_DUAL"/>
    <property type="match status" value="1"/>
</dbReference>
<keyword id="KW-0963">Cytoplasm</keyword>
<keyword id="KW-0378">Hydrolase</keyword>
<keyword id="KW-0904">Protein phosphatase</keyword>
<keyword id="KW-1185">Reference proteome</keyword>
<keyword id="KW-0346">Stress response</keyword>
<feature type="chain" id="PRO_0000333395" description="Putative tyrosine-protein phosphatase OCA1">
    <location>
        <begin position="1"/>
        <end position="158"/>
    </location>
</feature>
<feature type="domain" description="Tyrosine-protein phosphatase" evidence="2">
    <location>
        <begin position="7"/>
        <end position="158"/>
    </location>
</feature>
<feature type="active site" description="Phosphocysteine intermediate" evidence="2">
    <location>
        <position position="99"/>
    </location>
</feature>
<gene>
    <name type="primary">OCA1</name>
    <name type="ORF">UMAG_03897</name>
</gene>
<sequence length="158" mass="18274">MLVPPPNYGMVEENFYRSGQPDQLNFPFLEKLGLKSVIWLAPEEPEPGFLDFCVDQNIELHHLGVLYSTNAWDPITEEVVLQALHLLVQPATYPVLVMCNLGRHRTGTVVGCFRKLQRWNLSAILEEYRRFVGGQKYRILNEQFIELFDEELVFGASY</sequence>
<protein>
    <recommendedName>
        <fullName>Putative tyrosine-protein phosphatase OCA1</fullName>
        <ecNumber>3.1.3.48</ecNumber>
    </recommendedName>
</protein>
<accession>Q4P7L6</accession>
<accession>A0A0D1CM86</accession>